<keyword id="KW-0342">GTP-binding</keyword>
<keyword id="KW-0378">Hydrolase</keyword>
<keyword id="KW-0479">Metal-binding</keyword>
<keyword id="KW-0547">Nucleotide-binding</keyword>
<keyword id="KW-0554">One-carbon metabolism</keyword>
<keyword id="KW-1185">Reference proteome</keyword>
<keyword id="KW-0862">Zinc</keyword>
<organism>
    <name type="scientific">Shewanella denitrificans (strain OS217 / ATCC BAA-1090 / DSM 15013)</name>
    <dbReference type="NCBI Taxonomy" id="318161"/>
    <lineage>
        <taxon>Bacteria</taxon>
        <taxon>Pseudomonadati</taxon>
        <taxon>Pseudomonadota</taxon>
        <taxon>Gammaproteobacteria</taxon>
        <taxon>Alteromonadales</taxon>
        <taxon>Shewanellaceae</taxon>
        <taxon>Shewanella</taxon>
    </lineage>
</organism>
<gene>
    <name evidence="2" type="primary">folE</name>
    <name type="ordered locus">Sden_0321</name>
</gene>
<name>GCH1_SHEDO</name>
<evidence type="ECO:0000250" key="1"/>
<evidence type="ECO:0000255" key="2">
    <source>
        <dbReference type="HAMAP-Rule" id="MF_00223"/>
    </source>
</evidence>
<proteinExistence type="inferred from homology"/>
<comment type="catalytic activity">
    <reaction evidence="2">
        <text>GTP + H2O = 7,8-dihydroneopterin 3'-triphosphate + formate + H(+)</text>
        <dbReference type="Rhea" id="RHEA:17473"/>
        <dbReference type="ChEBI" id="CHEBI:15377"/>
        <dbReference type="ChEBI" id="CHEBI:15378"/>
        <dbReference type="ChEBI" id="CHEBI:15740"/>
        <dbReference type="ChEBI" id="CHEBI:37565"/>
        <dbReference type="ChEBI" id="CHEBI:58462"/>
        <dbReference type="EC" id="3.5.4.16"/>
    </reaction>
</comment>
<comment type="pathway">
    <text evidence="2">Cofactor biosynthesis; 7,8-dihydroneopterin triphosphate biosynthesis; 7,8-dihydroneopterin triphosphate from GTP: step 1/1.</text>
</comment>
<comment type="subunit">
    <text evidence="1">Toroid-shaped homodecamer, composed of two pentamers of five dimers.</text>
</comment>
<comment type="similarity">
    <text evidence="2">Belongs to the GTP cyclohydrolase I family.</text>
</comment>
<dbReference type="EC" id="3.5.4.16" evidence="2"/>
<dbReference type="EMBL" id="CP000302">
    <property type="protein sequence ID" value="ABE53616.1"/>
    <property type="molecule type" value="Genomic_DNA"/>
</dbReference>
<dbReference type="RefSeq" id="WP_011494783.1">
    <property type="nucleotide sequence ID" value="NC_007954.1"/>
</dbReference>
<dbReference type="SMR" id="Q12SG0"/>
<dbReference type="STRING" id="318161.Sden_0321"/>
<dbReference type="KEGG" id="sdn:Sden_0321"/>
<dbReference type="eggNOG" id="COG0302">
    <property type="taxonomic scope" value="Bacteria"/>
</dbReference>
<dbReference type="HOGENOM" id="CLU_049768_3_2_6"/>
<dbReference type="OrthoDB" id="9801207at2"/>
<dbReference type="UniPathway" id="UPA00848">
    <property type="reaction ID" value="UER00151"/>
</dbReference>
<dbReference type="Proteomes" id="UP000001982">
    <property type="component" value="Chromosome"/>
</dbReference>
<dbReference type="GO" id="GO:0005737">
    <property type="term" value="C:cytoplasm"/>
    <property type="evidence" value="ECO:0007669"/>
    <property type="project" value="TreeGrafter"/>
</dbReference>
<dbReference type="GO" id="GO:0005525">
    <property type="term" value="F:GTP binding"/>
    <property type="evidence" value="ECO:0007669"/>
    <property type="project" value="UniProtKB-KW"/>
</dbReference>
<dbReference type="GO" id="GO:0003934">
    <property type="term" value="F:GTP cyclohydrolase I activity"/>
    <property type="evidence" value="ECO:0007669"/>
    <property type="project" value="UniProtKB-UniRule"/>
</dbReference>
<dbReference type="GO" id="GO:0008270">
    <property type="term" value="F:zinc ion binding"/>
    <property type="evidence" value="ECO:0007669"/>
    <property type="project" value="UniProtKB-UniRule"/>
</dbReference>
<dbReference type="GO" id="GO:0006730">
    <property type="term" value="P:one-carbon metabolic process"/>
    <property type="evidence" value="ECO:0007669"/>
    <property type="project" value="UniProtKB-UniRule"/>
</dbReference>
<dbReference type="GO" id="GO:0006729">
    <property type="term" value="P:tetrahydrobiopterin biosynthetic process"/>
    <property type="evidence" value="ECO:0007669"/>
    <property type="project" value="TreeGrafter"/>
</dbReference>
<dbReference type="GO" id="GO:0046654">
    <property type="term" value="P:tetrahydrofolate biosynthetic process"/>
    <property type="evidence" value="ECO:0007669"/>
    <property type="project" value="UniProtKB-UniRule"/>
</dbReference>
<dbReference type="FunFam" id="3.30.1130.10:FF:000001">
    <property type="entry name" value="GTP cyclohydrolase 1"/>
    <property type="match status" value="1"/>
</dbReference>
<dbReference type="Gene3D" id="1.10.286.10">
    <property type="match status" value="1"/>
</dbReference>
<dbReference type="Gene3D" id="3.30.1130.10">
    <property type="match status" value="1"/>
</dbReference>
<dbReference type="HAMAP" id="MF_00223">
    <property type="entry name" value="FolE"/>
    <property type="match status" value="1"/>
</dbReference>
<dbReference type="InterPro" id="IPR043133">
    <property type="entry name" value="GTP-CH-I_C/QueF"/>
</dbReference>
<dbReference type="InterPro" id="IPR043134">
    <property type="entry name" value="GTP-CH-I_N"/>
</dbReference>
<dbReference type="InterPro" id="IPR001474">
    <property type="entry name" value="GTP_CycHdrlase_I"/>
</dbReference>
<dbReference type="InterPro" id="IPR018234">
    <property type="entry name" value="GTP_CycHdrlase_I_CS"/>
</dbReference>
<dbReference type="InterPro" id="IPR020602">
    <property type="entry name" value="GTP_CycHdrlase_I_dom"/>
</dbReference>
<dbReference type="NCBIfam" id="TIGR00063">
    <property type="entry name" value="folE"/>
    <property type="match status" value="1"/>
</dbReference>
<dbReference type="NCBIfam" id="NF006824">
    <property type="entry name" value="PRK09347.1-1"/>
    <property type="match status" value="1"/>
</dbReference>
<dbReference type="NCBIfam" id="NF006826">
    <property type="entry name" value="PRK09347.1-3"/>
    <property type="match status" value="1"/>
</dbReference>
<dbReference type="PANTHER" id="PTHR11109:SF7">
    <property type="entry name" value="GTP CYCLOHYDROLASE 1"/>
    <property type="match status" value="1"/>
</dbReference>
<dbReference type="PANTHER" id="PTHR11109">
    <property type="entry name" value="GTP CYCLOHYDROLASE I"/>
    <property type="match status" value="1"/>
</dbReference>
<dbReference type="Pfam" id="PF01227">
    <property type="entry name" value="GTP_cyclohydroI"/>
    <property type="match status" value="1"/>
</dbReference>
<dbReference type="SUPFAM" id="SSF55620">
    <property type="entry name" value="Tetrahydrobiopterin biosynthesis enzymes-like"/>
    <property type="match status" value="1"/>
</dbReference>
<dbReference type="PROSITE" id="PS00859">
    <property type="entry name" value="GTP_CYCLOHYDROL_1_1"/>
    <property type="match status" value="1"/>
</dbReference>
<dbReference type="PROSITE" id="PS00860">
    <property type="entry name" value="GTP_CYCLOHYDROL_1_2"/>
    <property type="match status" value="1"/>
</dbReference>
<protein>
    <recommendedName>
        <fullName evidence="2">GTP cyclohydrolase 1</fullName>
        <ecNumber evidence="2">3.5.4.16</ecNumber>
    </recommendedName>
    <alternativeName>
        <fullName evidence="2">GTP cyclohydrolase I</fullName>
        <shortName evidence="2">GTP-CH-I</shortName>
    </alternativeName>
</protein>
<accession>Q12SG0</accession>
<reference key="1">
    <citation type="submission" date="2006-03" db="EMBL/GenBank/DDBJ databases">
        <title>Complete sequence of Shewanella denitrificans OS217.</title>
        <authorList>
            <consortium name="US DOE Joint Genome Institute"/>
            <person name="Copeland A."/>
            <person name="Lucas S."/>
            <person name="Lapidus A."/>
            <person name="Barry K."/>
            <person name="Detter J.C."/>
            <person name="Glavina del Rio T."/>
            <person name="Hammon N."/>
            <person name="Israni S."/>
            <person name="Dalin E."/>
            <person name="Tice H."/>
            <person name="Pitluck S."/>
            <person name="Brettin T."/>
            <person name="Bruce D."/>
            <person name="Han C."/>
            <person name="Tapia R."/>
            <person name="Gilna P."/>
            <person name="Kiss H."/>
            <person name="Schmutz J."/>
            <person name="Larimer F."/>
            <person name="Land M."/>
            <person name="Hauser L."/>
            <person name="Kyrpides N."/>
            <person name="Lykidis A."/>
            <person name="Richardson P."/>
        </authorList>
    </citation>
    <scope>NUCLEOTIDE SEQUENCE [LARGE SCALE GENOMIC DNA]</scope>
    <source>
        <strain>OS217 / ATCC BAA-1090 / DSM 15013</strain>
    </source>
</reference>
<feature type="chain" id="PRO_1000043731" description="GTP cyclohydrolase 1">
    <location>
        <begin position="1"/>
        <end position="217"/>
    </location>
</feature>
<feature type="binding site" evidence="2">
    <location>
        <position position="108"/>
    </location>
    <ligand>
        <name>Zn(2+)</name>
        <dbReference type="ChEBI" id="CHEBI:29105"/>
    </ligand>
</feature>
<feature type="binding site" evidence="2">
    <location>
        <position position="111"/>
    </location>
    <ligand>
        <name>Zn(2+)</name>
        <dbReference type="ChEBI" id="CHEBI:29105"/>
    </ligand>
</feature>
<feature type="binding site" evidence="2">
    <location>
        <position position="179"/>
    </location>
    <ligand>
        <name>Zn(2+)</name>
        <dbReference type="ChEBI" id="CHEBI:29105"/>
    </ligand>
</feature>
<sequence length="217" mass="24369">MALSDAAIKVQAALNERGLETPMLPKTSTPEERKIKIEHHMREILTLMSLDLTDDSLMDTPRRIAKMYVDEIFSGLDYDNFPKITVIDNKMGFDEMVRVQDISLTSTCEHHLVTIDGLATVAYLPRAKIIGLSKINRIVRFFAQRPQVQERLTQQILVALQTLLETKDVAVKIDAVHFCVKSRGVMDSTSSTTTTSLGGIFKSNPATRAEFLQQAKF</sequence>